<proteinExistence type="evidence at protein level"/>
<sequence length="605" mass="68076">MAGLGPTFPLHRLVWANRHRELEAALHSRKHDIEQEDPQGRTPLELAVTLGNLESVRVLLRHNANVGKESHQGWAVLQEAVSTGDPEMVQLVLQYRDFQRATQRLAGIPELLNKLRQAPDFYVEMKWEFTSWVPLVSKMCPSDVYRVWKRGESLRVDTSLLGFEHMTWQRGRRSFIFRGQEAGALVMEVDHDRQVVHTETLAPALHEPEALLAAMRPSEEHVASRLTSPIVSTHLDTRNVAFERNKCGIWGWRSEKMESVSGYEAKVYSATNVELVTRTRTEHLSDQDKLRNKGGKTPFQSFLGMAQQHSSHTLAPVQQAASPTNPTAISAEEYFDPSFSLESRNIGRPIEMSSKVQRFKATLWLSEEHPLSLGDQVTPIIDLMAISNAHFAKLRDFITLRLPPGFPVKIEIPLFHVLNARITFSNLCGCDEPVSSVCVPNSSSAISASGSPFPCEVDPTVFEVPEGYSVLGAERSEPLRDEDDDLLQFAIQQSLLEAGTEAEQVTVWEALTNTRPGIHPPPRVTVFEEQLQLEQALQESLQLSTESRGPESPQKTPPSPAPPSFEEQLRLALELSSREQEELERRGQQEEDDLQRILQLSLTEH</sequence>
<accession>Q6PD24</accession>
<accession>G3X9A8</accession>
<keyword id="KW-1003">Cell membrane</keyword>
<keyword id="KW-0967">Endosome</keyword>
<keyword id="KW-0472">Membrane</keyword>
<keyword id="KW-0597">Phosphoprotein</keyword>
<keyword id="KW-1185">Reference proteome</keyword>
<keyword id="KW-0677">Repeat</keyword>
<protein>
    <recommendedName>
        <fullName>Ankyrin repeat domain-containing protein 13D</fullName>
    </recommendedName>
</protein>
<organism>
    <name type="scientific">Mus musculus</name>
    <name type="common">Mouse</name>
    <dbReference type="NCBI Taxonomy" id="10090"/>
    <lineage>
        <taxon>Eukaryota</taxon>
        <taxon>Metazoa</taxon>
        <taxon>Chordata</taxon>
        <taxon>Craniata</taxon>
        <taxon>Vertebrata</taxon>
        <taxon>Euteleostomi</taxon>
        <taxon>Mammalia</taxon>
        <taxon>Eutheria</taxon>
        <taxon>Euarchontoglires</taxon>
        <taxon>Glires</taxon>
        <taxon>Rodentia</taxon>
        <taxon>Myomorpha</taxon>
        <taxon>Muroidea</taxon>
        <taxon>Muridae</taxon>
        <taxon>Murinae</taxon>
        <taxon>Mus</taxon>
        <taxon>Mus</taxon>
    </lineage>
</organism>
<comment type="function">
    <text evidence="1">Ubiquitin-binding protein that specifically recognizes and binds 'Lys-63'-linked ubiquitin. Does not bind 'Lys-48'-linked ubiquitin. Positively regulates the internalization of ligand-activated EGFR by binding to the Ub moiety of ubiquitinated EGFR at the cell membrane (By similarity).</text>
</comment>
<comment type="subunit">
    <text evidence="1">Interacts with EGFR (ubiquitinated); the interaction is direct and may regulate EGFR internalization.</text>
</comment>
<comment type="subcellular location">
    <subcellularLocation>
        <location>Cell membrane</location>
    </subcellularLocation>
    <subcellularLocation>
        <location>Late endosome</location>
    </subcellularLocation>
    <text evidence="1">Interaction with EGFR may enhance association with the cell membrane.</text>
</comment>
<comment type="sequence caution" evidence="4">
    <conflict type="erroneous initiation">
        <sequence resource="EMBL-CDS" id="AAH58982"/>
    </conflict>
    <text>Truncated N-terminus.</text>
</comment>
<name>AN13D_MOUSE</name>
<evidence type="ECO:0000250" key="1"/>
<evidence type="ECO:0000255" key="2">
    <source>
        <dbReference type="PROSITE-ProRule" id="PRU00213"/>
    </source>
</evidence>
<evidence type="ECO:0000256" key="3">
    <source>
        <dbReference type="SAM" id="MobiDB-lite"/>
    </source>
</evidence>
<evidence type="ECO:0000305" key="4"/>
<evidence type="ECO:0007744" key="5">
    <source>
    </source>
</evidence>
<feature type="chain" id="PRO_0000240652" description="Ankyrin repeat domain-containing protein 13D">
    <location>
        <begin position="1"/>
        <end position="605"/>
    </location>
</feature>
<feature type="domain" description="UIM 1" evidence="2">
    <location>
        <begin position="482"/>
        <end position="501"/>
    </location>
</feature>
<feature type="domain" description="UIM 2" evidence="2">
    <location>
        <begin position="528"/>
        <end position="547"/>
    </location>
</feature>
<feature type="domain" description="UIM 3" evidence="2">
    <location>
        <begin position="564"/>
        <end position="583"/>
    </location>
</feature>
<feature type="domain" description="UIM 4" evidence="2">
    <location>
        <begin position="589"/>
        <end position="605"/>
    </location>
</feature>
<feature type="region of interest" description="Disordered" evidence="3">
    <location>
        <begin position="538"/>
        <end position="605"/>
    </location>
</feature>
<feature type="compositionally biased region" description="Low complexity" evidence="3">
    <location>
        <begin position="538"/>
        <end position="554"/>
    </location>
</feature>
<feature type="compositionally biased region" description="Low complexity" evidence="3">
    <location>
        <begin position="564"/>
        <end position="575"/>
    </location>
</feature>
<feature type="compositionally biased region" description="Basic and acidic residues" evidence="3">
    <location>
        <begin position="576"/>
        <end position="589"/>
    </location>
</feature>
<feature type="modified residue" description="Phosphoserine" evidence="5">
    <location>
        <position position="552"/>
    </location>
</feature>
<feature type="modified residue" description="Phosphothreonine" evidence="5">
    <location>
        <position position="556"/>
    </location>
</feature>
<gene>
    <name type="primary">Ankrd13d</name>
</gene>
<dbReference type="EMBL" id="AC140073">
    <property type="status" value="NOT_ANNOTATED_CDS"/>
    <property type="molecule type" value="Genomic_DNA"/>
</dbReference>
<dbReference type="EMBL" id="CH466612">
    <property type="protein sequence ID" value="EDL33042.1"/>
    <property type="molecule type" value="Genomic_DNA"/>
</dbReference>
<dbReference type="EMBL" id="BC058982">
    <property type="protein sequence ID" value="AAH58982.1"/>
    <property type="status" value="ALT_INIT"/>
    <property type="molecule type" value="mRNA"/>
</dbReference>
<dbReference type="CCDS" id="CCDS50351.1"/>
<dbReference type="RefSeq" id="NP_080996.2">
    <property type="nucleotide sequence ID" value="NM_026720.2"/>
</dbReference>
<dbReference type="SMR" id="Q6PD24"/>
<dbReference type="BioGRID" id="212847">
    <property type="interactions" value="5"/>
</dbReference>
<dbReference type="FunCoup" id="Q6PD24">
    <property type="interactions" value="2199"/>
</dbReference>
<dbReference type="IntAct" id="Q6PD24">
    <property type="interactions" value="1"/>
</dbReference>
<dbReference type="STRING" id="10090.ENSMUSP00000053783"/>
<dbReference type="iPTMnet" id="Q6PD24"/>
<dbReference type="PhosphoSitePlus" id="Q6PD24"/>
<dbReference type="PaxDb" id="10090-ENSMUSP00000053783"/>
<dbReference type="PeptideAtlas" id="Q6PD24"/>
<dbReference type="ProteomicsDB" id="281977"/>
<dbReference type="Pumba" id="Q6PD24"/>
<dbReference type="Antibodypedia" id="44541">
    <property type="antibodies" value="51 antibodies from 16 providers"/>
</dbReference>
<dbReference type="Ensembl" id="ENSMUST00000056888.13">
    <property type="protein sequence ID" value="ENSMUSP00000053783.7"/>
    <property type="gene ID" value="ENSMUSG00000005986.17"/>
</dbReference>
<dbReference type="GeneID" id="68423"/>
<dbReference type="KEGG" id="mmu:68423"/>
<dbReference type="UCSC" id="uc008fzr.1">
    <property type="organism name" value="mouse"/>
</dbReference>
<dbReference type="AGR" id="MGI:1915673"/>
<dbReference type="CTD" id="338692"/>
<dbReference type="MGI" id="MGI:1915673">
    <property type="gene designation" value="Ankrd13d"/>
</dbReference>
<dbReference type="VEuPathDB" id="HostDB:ENSMUSG00000005986"/>
<dbReference type="eggNOG" id="KOG0522">
    <property type="taxonomic scope" value="Eukaryota"/>
</dbReference>
<dbReference type="GeneTree" id="ENSGT00950000182928"/>
<dbReference type="HOGENOM" id="CLU_026137_2_0_1"/>
<dbReference type="InParanoid" id="Q6PD24"/>
<dbReference type="OMA" id="TQKFRAN"/>
<dbReference type="OrthoDB" id="1585644at2759"/>
<dbReference type="PhylomeDB" id="Q6PD24"/>
<dbReference type="TreeFam" id="TF314176"/>
<dbReference type="BioGRID-ORCS" id="68423">
    <property type="hits" value="2 hits in 81 CRISPR screens"/>
</dbReference>
<dbReference type="ChiTaRS" id="Ankrd13d">
    <property type="organism name" value="mouse"/>
</dbReference>
<dbReference type="PRO" id="PR:Q6PD24"/>
<dbReference type="Proteomes" id="UP000000589">
    <property type="component" value="Chromosome 19"/>
</dbReference>
<dbReference type="RNAct" id="Q6PD24">
    <property type="molecule type" value="protein"/>
</dbReference>
<dbReference type="Bgee" id="ENSMUSG00000005986">
    <property type="expression patterns" value="Expressed in granulocyte and 201 other cell types or tissues"/>
</dbReference>
<dbReference type="ExpressionAtlas" id="Q6PD24">
    <property type="expression patterns" value="baseline and differential"/>
</dbReference>
<dbReference type="GO" id="GO:0005737">
    <property type="term" value="C:cytoplasm"/>
    <property type="evidence" value="ECO:0000250"/>
    <property type="project" value="UniProtKB"/>
</dbReference>
<dbReference type="GO" id="GO:0005770">
    <property type="term" value="C:late endosome"/>
    <property type="evidence" value="ECO:0007669"/>
    <property type="project" value="UniProtKB-SubCell"/>
</dbReference>
<dbReference type="GO" id="GO:0048471">
    <property type="term" value="C:perinuclear region of cytoplasm"/>
    <property type="evidence" value="ECO:0000250"/>
    <property type="project" value="UniProtKB"/>
</dbReference>
<dbReference type="GO" id="GO:0005886">
    <property type="term" value="C:plasma membrane"/>
    <property type="evidence" value="ECO:0000250"/>
    <property type="project" value="UniProtKB"/>
</dbReference>
<dbReference type="GO" id="GO:0140036">
    <property type="term" value="F:ubiquitin-modified protein reader activity"/>
    <property type="evidence" value="ECO:0000250"/>
    <property type="project" value="UniProtKB"/>
</dbReference>
<dbReference type="GO" id="GO:0002091">
    <property type="term" value="P:negative regulation of receptor internalization"/>
    <property type="evidence" value="ECO:0000250"/>
    <property type="project" value="UniProtKB"/>
</dbReference>
<dbReference type="FunFam" id="1.25.40.20:FF:000057">
    <property type="entry name" value="Ankyrin repeat domain-containing protein 13B"/>
    <property type="match status" value="1"/>
</dbReference>
<dbReference type="Gene3D" id="1.25.40.20">
    <property type="entry name" value="Ankyrin repeat-containing domain"/>
    <property type="match status" value="1"/>
</dbReference>
<dbReference type="InterPro" id="IPR021832">
    <property type="entry name" value="ANKRD13"/>
</dbReference>
<dbReference type="InterPro" id="IPR055285">
    <property type="entry name" value="ANKRD13_C"/>
</dbReference>
<dbReference type="InterPro" id="IPR002110">
    <property type="entry name" value="Ankyrin_rpt"/>
</dbReference>
<dbReference type="InterPro" id="IPR036770">
    <property type="entry name" value="Ankyrin_rpt-contain_sf"/>
</dbReference>
<dbReference type="InterPro" id="IPR003903">
    <property type="entry name" value="UIM_dom"/>
</dbReference>
<dbReference type="PANTHER" id="PTHR12447">
    <property type="entry name" value="ANKYRIN REPEAT DOMAIN-CONTAINING PROTEIN 13"/>
    <property type="match status" value="1"/>
</dbReference>
<dbReference type="PANTHER" id="PTHR12447:SF2">
    <property type="entry name" value="ANKYRIN REPEAT DOMAIN-CONTAINING PROTEIN 13D"/>
    <property type="match status" value="1"/>
</dbReference>
<dbReference type="Pfam" id="PF12796">
    <property type="entry name" value="Ank_2"/>
    <property type="match status" value="1"/>
</dbReference>
<dbReference type="Pfam" id="PF11904">
    <property type="entry name" value="ANKRD13_C"/>
    <property type="match status" value="1"/>
</dbReference>
<dbReference type="SMART" id="SM00248">
    <property type="entry name" value="ANK"/>
    <property type="match status" value="2"/>
</dbReference>
<dbReference type="SMART" id="SM00726">
    <property type="entry name" value="UIM"/>
    <property type="match status" value="4"/>
</dbReference>
<dbReference type="SUPFAM" id="SSF48403">
    <property type="entry name" value="Ankyrin repeat"/>
    <property type="match status" value="1"/>
</dbReference>
<dbReference type="PROSITE" id="PS50297">
    <property type="entry name" value="ANK_REP_REGION"/>
    <property type="match status" value="1"/>
</dbReference>
<dbReference type="PROSITE" id="PS50088">
    <property type="entry name" value="ANK_REPEAT"/>
    <property type="match status" value="1"/>
</dbReference>
<dbReference type="PROSITE" id="PS50330">
    <property type="entry name" value="UIM"/>
    <property type="match status" value="2"/>
</dbReference>
<reference key="1">
    <citation type="journal article" date="2009" name="PLoS Biol.">
        <title>Lineage-specific biology revealed by a finished genome assembly of the mouse.</title>
        <authorList>
            <person name="Church D.M."/>
            <person name="Goodstadt L."/>
            <person name="Hillier L.W."/>
            <person name="Zody M.C."/>
            <person name="Goldstein S."/>
            <person name="She X."/>
            <person name="Bult C.J."/>
            <person name="Agarwala R."/>
            <person name="Cherry J.L."/>
            <person name="DiCuccio M."/>
            <person name="Hlavina W."/>
            <person name="Kapustin Y."/>
            <person name="Meric P."/>
            <person name="Maglott D."/>
            <person name="Birtle Z."/>
            <person name="Marques A.C."/>
            <person name="Graves T."/>
            <person name="Zhou S."/>
            <person name="Teague B."/>
            <person name="Potamousis K."/>
            <person name="Churas C."/>
            <person name="Place M."/>
            <person name="Herschleb J."/>
            <person name="Runnheim R."/>
            <person name="Forrest D."/>
            <person name="Amos-Landgraf J."/>
            <person name="Schwartz D.C."/>
            <person name="Cheng Z."/>
            <person name="Lindblad-Toh K."/>
            <person name="Eichler E.E."/>
            <person name="Ponting C.P."/>
        </authorList>
    </citation>
    <scope>NUCLEOTIDE SEQUENCE [LARGE SCALE GENOMIC DNA]</scope>
    <source>
        <strain>C57BL/6J</strain>
    </source>
</reference>
<reference key="2">
    <citation type="submission" date="2005-07" db="EMBL/GenBank/DDBJ databases">
        <authorList>
            <person name="Mural R.J."/>
            <person name="Adams M.D."/>
            <person name="Myers E.W."/>
            <person name="Smith H.O."/>
            <person name="Venter J.C."/>
        </authorList>
    </citation>
    <scope>NUCLEOTIDE SEQUENCE [LARGE SCALE GENOMIC DNA]</scope>
</reference>
<reference key="3">
    <citation type="journal article" date="2004" name="Genome Res.">
        <title>The status, quality, and expansion of the NIH full-length cDNA project: the Mammalian Gene Collection (MGC).</title>
        <authorList>
            <consortium name="The MGC Project Team"/>
        </authorList>
    </citation>
    <scope>NUCLEOTIDE SEQUENCE [LARGE SCALE MRNA]</scope>
    <source>
        <strain>C57BL/6J</strain>
        <tissue>Brain</tissue>
    </source>
</reference>
<reference key="4">
    <citation type="journal article" date="2010" name="Cell">
        <title>A tissue-specific atlas of mouse protein phosphorylation and expression.</title>
        <authorList>
            <person name="Huttlin E.L."/>
            <person name="Jedrychowski M.P."/>
            <person name="Elias J.E."/>
            <person name="Goswami T."/>
            <person name="Rad R."/>
            <person name="Beausoleil S.A."/>
            <person name="Villen J."/>
            <person name="Haas W."/>
            <person name="Sowa M.E."/>
            <person name="Gygi S.P."/>
        </authorList>
    </citation>
    <scope>PHOSPHORYLATION [LARGE SCALE ANALYSIS] AT SER-552 AND THR-556</scope>
    <scope>IDENTIFICATION BY MASS SPECTROMETRY [LARGE SCALE ANALYSIS]</scope>
    <source>
        <tissue>Brain</tissue>
    </source>
</reference>